<dbReference type="EC" id="3.2.1.17"/>
<dbReference type="EMBL" id="M95098">
    <property type="protein sequence ID" value="AAC37311.1"/>
    <property type="molecule type" value="Unassigned_DNA"/>
</dbReference>
<dbReference type="PIR" id="C34277">
    <property type="entry name" value="LZBO"/>
</dbReference>
<dbReference type="RefSeq" id="NP_851342.1">
    <property type="nucleotide sequence ID" value="NM_180999.1"/>
</dbReference>
<dbReference type="PDB" id="2Z2F">
    <property type="method" value="X-ray"/>
    <property type="resolution" value="1.50 A"/>
    <property type="chains" value="A=19-147"/>
</dbReference>
<dbReference type="PDBsum" id="2Z2F"/>
<dbReference type="SMR" id="Q06283"/>
<dbReference type="FunCoup" id="Q06283">
    <property type="interactions" value="17"/>
</dbReference>
<dbReference type="STRING" id="9913.ENSBTAP00000007924"/>
<dbReference type="CAZy" id="GH22">
    <property type="family name" value="Glycoside Hydrolase Family 22"/>
</dbReference>
<dbReference type="PaxDb" id="9913-ENSBTAP00000007924"/>
<dbReference type="GeneID" id="280849"/>
<dbReference type="KEGG" id="bta:280849"/>
<dbReference type="CTD" id="17105"/>
<dbReference type="VEuPathDB" id="HostDB:ENSBTAG00000026088"/>
<dbReference type="eggNOG" id="ENOG502S1S1">
    <property type="taxonomic scope" value="Eukaryota"/>
</dbReference>
<dbReference type="HOGENOM" id="CLU_111620_0_1_1"/>
<dbReference type="InParanoid" id="Q06283"/>
<dbReference type="OMA" id="WACIADH"/>
<dbReference type="OrthoDB" id="9698384at2759"/>
<dbReference type="TreeFam" id="TF324882"/>
<dbReference type="BRENDA" id="3.2.1.17">
    <property type="organism ID" value="908"/>
</dbReference>
<dbReference type="Reactome" id="R-BTA-6798695">
    <property type="pathway name" value="Neutrophil degranulation"/>
</dbReference>
<dbReference type="Reactome" id="R-BTA-6803157">
    <property type="pathway name" value="Antimicrobial peptides"/>
</dbReference>
<dbReference type="EvolutionaryTrace" id="Q06283"/>
<dbReference type="Proteomes" id="UP000009136">
    <property type="component" value="Chromosome 5"/>
</dbReference>
<dbReference type="Bgee" id="ENSBTAG00000026088">
    <property type="expression patterns" value="Expressed in urinary bladder and 72 other cell types or tissues"/>
</dbReference>
<dbReference type="GO" id="GO:0003796">
    <property type="term" value="F:lysozyme activity"/>
    <property type="evidence" value="ECO:0000318"/>
    <property type="project" value="GO_Central"/>
</dbReference>
<dbReference type="GO" id="GO:0050829">
    <property type="term" value="P:defense response to Gram-negative bacterium"/>
    <property type="evidence" value="ECO:0000318"/>
    <property type="project" value="GO_Central"/>
</dbReference>
<dbReference type="GO" id="GO:0050830">
    <property type="term" value="P:defense response to Gram-positive bacterium"/>
    <property type="evidence" value="ECO:0000318"/>
    <property type="project" value="GO_Central"/>
</dbReference>
<dbReference type="GO" id="GO:0007586">
    <property type="term" value="P:digestion"/>
    <property type="evidence" value="ECO:0007669"/>
    <property type="project" value="UniProtKB-KW"/>
</dbReference>
<dbReference type="GO" id="GO:0031640">
    <property type="term" value="P:killing of cells of another organism"/>
    <property type="evidence" value="ECO:0007669"/>
    <property type="project" value="UniProtKB-KW"/>
</dbReference>
<dbReference type="CDD" id="cd16897">
    <property type="entry name" value="LYZ_C"/>
    <property type="match status" value="1"/>
</dbReference>
<dbReference type="FunFam" id="1.10.530.10:FF:000001">
    <property type="entry name" value="Lysozyme C"/>
    <property type="match status" value="1"/>
</dbReference>
<dbReference type="Gene3D" id="1.10.530.10">
    <property type="match status" value="1"/>
</dbReference>
<dbReference type="InterPro" id="IPR001916">
    <property type="entry name" value="Glyco_hydro_22"/>
</dbReference>
<dbReference type="InterPro" id="IPR019799">
    <property type="entry name" value="Glyco_hydro_22_CS"/>
</dbReference>
<dbReference type="InterPro" id="IPR000974">
    <property type="entry name" value="Glyco_hydro_22_lys"/>
</dbReference>
<dbReference type="InterPro" id="IPR023346">
    <property type="entry name" value="Lysozyme-like_dom_sf"/>
</dbReference>
<dbReference type="PANTHER" id="PTHR11407">
    <property type="entry name" value="LYSOZYME C"/>
    <property type="match status" value="1"/>
</dbReference>
<dbReference type="PANTHER" id="PTHR11407:SF28">
    <property type="entry name" value="LYSOZYME C"/>
    <property type="match status" value="1"/>
</dbReference>
<dbReference type="Pfam" id="PF00062">
    <property type="entry name" value="Lys"/>
    <property type="match status" value="1"/>
</dbReference>
<dbReference type="PRINTS" id="PR00137">
    <property type="entry name" value="LYSOZYME"/>
</dbReference>
<dbReference type="PRINTS" id="PR00135">
    <property type="entry name" value="LYZLACT"/>
</dbReference>
<dbReference type="SMART" id="SM00263">
    <property type="entry name" value="LYZ1"/>
    <property type="match status" value="1"/>
</dbReference>
<dbReference type="SUPFAM" id="SSF53955">
    <property type="entry name" value="Lysozyme-like"/>
    <property type="match status" value="1"/>
</dbReference>
<dbReference type="PROSITE" id="PS00128">
    <property type="entry name" value="GLYCOSYL_HYDROL_F22_1"/>
    <property type="match status" value="1"/>
</dbReference>
<dbReference type="PROSITE" id="PS51348">
    <property type="entry name" value="GLYCOSYL_HYDROL_F22_2"/>
    <property type="match status" value="1"/>
</dbReference>
<accession>Q06283</accession>
<keyword id="KW-0002">3D-structure</keyword>
<keyword id="KW-0929">Antimicrobial</keyword>
<keyword id="KW-0081">Bacteriolytic enzyme</keyword>
<keyword id="KW-0222">Digestion</keyword>
<keyword id="KW-1015">Disulfide bond</keyword>
<keyword id="KW-0326">Glycosidase</keyword>
<keyword id="KW-0378">Hydrolase</keyword>
<keyword id="KW-1185">Reference proteome</keyword>
<keyword id="KW-0732">Signal</keyword>
<gene>
    <name type="primary">LYZ2</name>
</gene>
<feature type="signal peptide" evidence="1">
    <location>
        <begin position="1"/>
        <end position="18"/>
    </location>
</feature>
<feature type="chain" id="PRO_0000018455" description="Lysozyme C-2">
    <location>
        <begin position="19"/>
        <end position="147"/>
    </location>
</feature>
<feature type="domain" description="C-type lysozyme" evidence="2">
    <location>
        <begin position="19"/>
        <end position="147"/>
    </location>
</feature>
<feature type="active site" evidence="2">
    <location>
        <position position="53"/>
    </location>
</feature>
<feature type="active site" evidence="2">
    <location>
        <position position="71"/>
    </location>
</feature>
<feature type="disulfide bond" evidence="2 3">
    <location>
        <begin position="24"/>
        <end position="145"/>
    </location>
</feature>
<feature type="disulfide bond" evidence="2 3">
    <location>
        <begin position="48"/>
        <end position="133"/>
    </location>
</feature>
<feature type="disulfide bond" evidence="2 3">
    <location>
        <begin position="83"/>
        <end position="99"/>
    </location>
</feature>
<feature type="disulfide bond" evidence="2 3">
    <location>
        <begin position="95"/>
        <end position="113"/>
    </location>
</feature>
<feature type="helix" evidence="4">
    <location>
        <begin position="23"/>
        <end position="32"/>
    </location>
</feature>
<feature type="helix" evidence="4">
    <location>
        <begin position="43"/>
        <end position="54"/>
    </location>
</feature>
<feature type="strand" evidence="4">
    <location>
        <begin position="61"/>
        <end position="64"/>
    </location>
</feature>
<feature type="turn" evidence="4">
    <location>
        <begin position="65"/>
        <end position="68"/>
    </location>
</feature>
<feature type="strand" evidence="4">
    <location>
        <begin position="69"/>
        <end position="72"/>
    </location>
</feature>
<feature type="turn" evidence="4">
    <location>
        <begin position="73"/>
        <end position="76"/>
    </location>
</feature>
<feature type="turn" evidence="4">
    <location>
        <begin position="79"/>
        <end position="81"/>
    </location>
</feature>
<feature type="strand" evidence="4">
    <location>
        <begin position="82"/>
        <end position="84"/>
    </location>
</feature>
<feature type="strand" evidence="4">
    <location>
        <begin position="88"/>
        <end position="90"/>
    </location>
</feature>
<feature type="strand" evidence="4">
    <location>
        <begin position="96"/>
        <end position="98"/>
    </location>
</feature>
<feature type="helix" evidence="4">
    <location>
        <begin position="99"/>
        <end position="103"/>
    </location>
</feature>
<feature type="strand" evidence="4">
    <location>
        <begin position="104"/>
        <end position="106"/>
    </location>
</feature>
<feature type="helix" evidence="4">
    <location>
        <begin position="108"/>
        <end position="121"/>
    </location>
</feature>
<feature type="helix" evidence="4">
    <location>
        <begin position="123"/>
        <end position="125"/>
    </location>
</feature>
<feature type="helix" evidence="4">
    <location>
        <begin position="127"/>
        <end position="132"/>
    </location>
</feature>
<feature type="turn" evidence="4">
    <location>
        <begin position="133"/>
        <end position="135"/>
    </location>
</feature>
<feature type="helix" evidence="4">
    <location>
        <begin position="139"/>
        <end position="142"/>
    </location>
</feature>
<evidence type="ECO:0000250" key="1"/>
<evidence type="ECO:0000255" key="2">
    <source>
        <dbReference type="PROSITE-ProRule" id="PRU00680"/>
    </source>
</evidence>
<evidence type="ECO:0000269" key="3">
    <source>
    </source>
</evidence>
<evidence type="ECO:0007829" key="4">
    <source>
        <dbReference type="PDB" id="2Z2F"/>
    </source>
</evidence>
<organism>
    <name type="scientific">Bos taurus</name>
    <name type="common">Bovine</name>
    <dbReference type="NCBI Taxonomy" id="9913"/>
    <lineage>
        <taxon>Eukaryota</taxon>
        <taxon>Metazoa</taxon>
        <taxon>Chordata</taxon>
        <taxon>Craniata</taxon>
        <taxon>Vertebrata</taxon>
        <taxon>Euteleostomi</taxon>
        <taxon>Mammalia</taxon>
        <taxon>Eutheria</taxon>
        <taxon>Laurasiatheria</taxon>
        <taxon>Artiodactyla</taxon>
        <taxon>Ruminantia</taxon>
        <taxon>Pecora</taxon>
        <taxon>Bovidae</taxon>
        <taxon>Bovinae</taxon>
        <taxon>Bos</taxon>
    </lineage>
</organism>
<comment type="function">
    <text>Lysozymes have primarily a bacteriolytic function; those in tissues and body fluids are associated with the monocyte-macrophage system and enhance the activity of immunoagents.</text>
</comment>
<comment type="catalytic activity">
    <reaction>
        <text>Hydrolysis of (1-&gt;4)-beta-linkages between N-acetylmuramic acid and N-acetyl-D-glucosamine residues in a peptidoglycan and between N-acetyl-D-glucosamine residues in chitodextrins.</text>
        <dbReference type="EC" id="3.2.1.17"/>
    </reaction>
</comment>
<comment type="subunit">
    <text>Monomer.</text>
</comment>
<comment type="tissue specificity">
    <text>Stomach-specific.</text>
</comment>
<comment type="miscellaneous">
    <text>Lysozyme C is capable of both hydrolysis and transglycosylation; it also shows a slight esterase activity. It acts rapidly on both peptide-substituted and unsubstituted peptidoglycan, and slowly on chitin oligosaccharides.</text>
</comment>
<comment type="miscellaneous">
    <text>The ruminant gastric lysozymes, which digest symbiotic bacteria coming with cud from the rumen, are much more resistant to inactivation by pepsin than are other lysozymes.</text>
</comment>
<comment type="similarity">
    <text evidence="2">Belongs to the glycosyl hydrolase 22 family.</text>
</comment>
<sequence>MKALVILGFLFLSVAVQGKVFERCELARTLKKLGLDGYKGVSLANWLCLTKWESSYNTKATNYNPSSESTDYGIFQINSKWWCNDGKTPNAVDGCHVSCSELMENDIAKAVACAKHIVSEQGITAWVAWKSHCRDHDVSSYVEGCTL</sequence>
<protein>
    <recommendedName>
        <fullName>Lysozyme C-2</fullName>
        <ecNumber>3.2.1.17</ecNumber>
    </recommendedName>
    <alternativeName>
        <fullName>1,4-beta-N-acetylmuramidase C</fullName>
    </alternativeName>
</protein>
<name>LYSC2_BOVIN</name>
<reference key="1">
    <citation type="journal article" date="1993" name="J. Mol. Evol.">
        <title>Characterization of the cow stomach lysozyme genes: repetitive DNA and concerted evolution.</title>
        <authorList>
            <person name="Irwin D.M."/>
            <person name="White R.T."/>
            <person name="Wilson A.C."/>
        </authorList>
    </citation>
    <scope>NUCLEOTIDE SEQUENCE</scope>
</reference>
<reference key="2">
    <citation type="journal article" date="2009" name="FEBS J.">
        <title>X-ray crystallography and structural stability of digestive lysozyme from cow stomach.</title>
        <authorList>
            <person name="Nonaka Y."/>
            <person name="Akieda D."/>
            <person name="Aizawa T."/>
            <person name="Watanabe N."/>
            <person name="Kamiya M."/>
            <person name="Kumaki Y."/>
            <person name="Mizuguchi M."/>
            <person name="Kikukawa T."/>
            <person name="Demura M."/>
            <person name="Kawano K."/>
        </authorList>
    </citation>
    <scope>X-RAY CRYSTALLOGRAPHY (1.5 ANGSTROMS) OF 19-147</scope>
    <scope>DISULFIDE BONDS</scope>
</reference>
<proteinExistence type="evidence at protein level"/>